<protein>
    <recommendedName>
        <fullName evidence="1">Adenosylhomocysteinase</fullName>
        <ecNumber evidence="1">3.13.2.1</ecNumber>
    </recommendedName>
    <alternativeName>
        <fullName evidence="1">S-adenosyl-L-homocysteine hydrolase</fullName>
        <shortName evidence="1">AdoHcyase</shortName>
    </alternativeName>
</protein>
<dbReference type="EC" id="3.13.2.1" evidence="1"/>
<dbReference type="EMBL" id="BX640437">
    <property type="protein sequence ID" value="CAE30697.1"/>
    <property type="molecule type" value="Genomic_DNA"/>
</dbReference>
<dbReference type="RefSeq" id="WP_003807196.1">
    <property type="nucleotide sequence ID" value="NC_002927.3"/>
</dbReference>
<dbReference type="SMR" id="Q7WQX5"/>
<dbReference type="GeneID" id="93206426"/>
<dbReference type="KEGG" id="bbr:BB0198"/>
<dbReference type="eggNOG" id="COG0499">
    <property type="taxonomic scope" value="Bacteria"/>
</dbReference>
<dbReference type="HOGENOM" id="CLU_025194_2_1_4"/>
<dbReference type="UniPathway" id="UPA00314">
    <property type="reaction ID" value="UER00076"/>
</dbReference>
<dbReference type="Proteomes" id="UP000001027">
    <property type="component" value="Chromosome"/>
</dbReference>
<dbReference type="GO" id="GO:0005829">
    <property type="term" value="C:cytosol"/>
    <property type="evidence" value="ECO:0007669"/>
    <property type="project" value="TreeGrafter"/>
</dbReference>
<dbReference type="GO" id="GO:0004013">
    <property type="term" value="F:adenosylhomocysteinase activity"/>
    <property type="evidence" value="ECO:0007669"/>
    <property type="project" value="UniProtKB-UniRule"/>
</dbReference>
<dbReference type="GO" id="GO:0071269">
    <property type="term" value="P:L-homocysteine biosynthetic process"/>
    <property type="evidence" value="ECO:0007669"/>
    <property type="project" value="UniProtKB-UniRule"/>
</dbReference>
<dbReference type="GO" id="GO:0006730">
    <property type="term" value="P:one-carbon metabolic process"/>
    <property type="evidence" value="ECO:0007669"/>
    <property type="project" value="UniProtKB-KW"/>
</dbReference>
<dbReference type="GO" id="GO:0033353">
    <property type="term" value="P:S-adenosylmethionine cycle"/>
    <property type="evidence" value="ECO:0007669"/>
    <property type="project" value="TreeGrafter"/>
</dbReference>
<dbReference type="CDD" id="cd00401">
    <property type="entry name" value="SAHH"/>
    <property type="match status" value="1"/>
</dbReference>
<dbReference type="FunFam" id="3.40.50.720:FF:000004">
    <property type="entry name" value="Adenosylhomocysteinase"/>
    <property type="match status" value="1"/>
</dbReference>
<dbReference type="Gene3D" id="3.40.50.1480">
    <property type="entry name" value="Adenosylhomocysteinase-like"/>
    <property type="match status" value="1"/>
</dbReference>
<dbReference type="Gene3D" id="3.40.50.720">
    <property type="entry name" value="NAD(P)-binding Rossmann-like Domain"/>
    <property type="match status" value="1"/>
</dbReference>
<dbReference type="HAMAP" id="MF_00563">
    <property type="entry name" value="AdoHcyase"/>
    <property type="match status" value="1"/>
</dbReference>
<dbReference type="InterPro" id="IPR042172">
    <property type="entry name" value="Adenosylhomocyst_ase-like_sf"/>
</dbReference>
<dbReference type="InterPro" id="IPR000043">
    <property type="entry name" value="Adenosylhomocysteinase-like"/>
</dbReference>
<dbReference type="InterPro" id="IPR015878">
    <property type="entry name" value="Ado_hCys_hydrolase_NAD-bd"/>
</dbReference>
<dbReference type="InterPro" id="IPR036291">
    <property type="entry name" value="NAD(P)-bd_dom_sf"/>
</dbReference>
<dbReference type="InterPro" id="IPR020082">
    <property type="entry name" value="S-Ado-L-homoCys_hydrolase_CS"/>
</dbReference>
<dbReference type="NCBIfam" id="TIGR00936">
    <property type="entry name" value="ahcY"/>
    <property type="match status" value="1"/>
</dbReference>
<dbReference type="NCBIfam" id="NF004005">
    <property type="entry name" value="PRK05476.2-3"/>
    <property type="match status" value="1"/>
</dbReference>
<dbReference type="PANTHER" id="PTHR23420">
    <property type="entry name" value="ADENOSYLHOMOCYSTEINASE"/>
    <property type="match status" value="1"/>
</dbReference>
<dbReference type="PANTHER" id="PTHR23420:SF0">
    <property type="entry name" value="ADENOSYLHOMOCYSTEINASE"/>
    <property type="match status" value="1"/>
</dbReference>
<dbReference type="Pfam" id="PF05221">
    <property type="entry name" value="AdoHcyase"/>
    <property type="match status" value="1"/>
</dbReference>
<dbReference type="Pfam" id="PF00670">
    <property type="entry name" value="AdoHcyase_NAD"/>
    <property type="match status" value="1"/>
</dbReference>
<dbReference type="PIRSF" id="PIRSF001109">
    <property type="entry name" value="Ad_hcy_hydrolase"/>
    <property type="match status" value="1"/>
</dbReference>
<dbReference type="SMART" id="SM00996">
    <property type="entry name" value="AdoHcyase"/>
    <property type="match status" value="1"/>
</dbReference>
<dbReference type="SMART" id="SM00997">
    <property type="entry name" value="AdoHcyase_NAD"/>
    <property type="match status" value="1"/>
</dbReference>
<dbReference type="SUPFAM" id="SSF52283">
    <property type="entry name" value="Formate/glycerate dehydrogenase catalytic domain-like"/>
    <property type="match status" value="1"/>
</dbReference>
<dbReference type="SUPFAM" id="SSF51735">
    <property type="entry name" value="NAD(P)-binding Rossmann-fold domains"/>
    <property type="match status" value="1"/>
</dbReference>
<dbReference type="PROSITE" id="PS00738">
    <property type="entry name" value="ADOHCYASE_1"/>
    <property type="match status" value="1"/>
</dbReference>
<dbReference type="PROSITE" id="PS00739">
    <property type="entry name" value="ADOHCYASE_2"/>
    <property type="match status" value="1"/>
</dbReference>
<gene>
    <name evidence="1" type="primary">ahcY</name>
    <name type="synonym">acyH</name>
    <name type="ordered locus">BB0198</name>
</gene>
<feature type="chain" id="PRO_0000116947" description="Adenosylhomocysteinase">
    <location>
        <begin position="1"/>
        <end position="472"/>
    </location>
</feature>
<feature type="binding site" evidence="1">
    <location>
        <position position="62"/>
    </location>
    <ligand>
        <name>substrate</name>
    </ligand>
</feature>
<feature type="binding site" evidence="1">
    <location>
        <position position="137"/>
    </location>
    <ligand>
        <name>substrate</name>
    </ligand>
</feature>
<feature type="binding site" evidence="1">
    <location>
        <position position="197"/>
    </location>
    <ligand>
        <name>substrate</name>
    </ligand>
</feature>
<feature type="binding site" evidence="1">
    <location>
        <begin position="198"/>
        <end position="200"/>
    </location>
    <ligand>
        <name>NAD(+)</name>
        <dbReference type="ChEBI" id="CHEBI:57540"/>
    </ligand>
</feature>
<feature type="binding site" evidence="1">
    <location>
        <position position="227"/>
    </location>
    <ligand>
        <name>substrate</name>
    </ligand>
</feature>
<feature type="binding site" evidence="1">
    <location>
        <position position="231"/>
    </location>
    <ligand>
        <name>substrate</name>
    </ligand>
</feature>
<feature type="binding site" evidence="1">
    <location>
        <position position="232"/>
    </location>
    <ligand>
        <name>NAD(+)</name>
        <dbReference type="ChEBI" id="CHEBI:57540"/>
    </ligand>
</feature>
<feature type="binding site" evidence="1">
    <location>
        <begin position="261"/>
        <end position="266"/>
    </location>
    <ligand>
        <name>NAD(+)</name>
        <dbReference type="ChEBI" id="CHEBI:57540"/>
    </ligand>
</feature>
<feature type="binding site" evidence="1">
    <location>
        <position position="284"/>
    </location>
    <ligand>
        <name>NAD(+)</name>
        <dbReference type="ChEBI" id="CHEBI:57540"/>
    </ligand>
</feature>
<feature type="binding site" evidence="1">
    <location>
        <position position="319"/>
    </location>
    <ligand>
        <name>NAD(+)</name>
        <dbReference type="ChEBI" id="CHEBI:57540"/>
    </ligand>
</feature>
<feature type="binding site" evidence="1">
    <location>
        <begin position="340"/>
        <end position="342"/>
    </location>
    <ligand>
        <name>NAD(+)</name>
        <dbReference type="ChEBI" id="CHEBI:57540"/>
    </ligand>
</feature>
<feature type="binding site" evidence="1">
    <location>
        <position position="385"/>
    </location>
    <ligand>
        <name>NAD(+)</name>
        <dbReference type="ChEBI" id="CHEBI:57540"/>
    </ligand>
</feature>
<organism>
    <name type="scientific">Bordetella bronchiseptica (strain ATCC BAA-588 / NCTC 13252 / RB50)</name>
    <name type="common">Alcaligenes bronchisepticus</name>
    <dbReference type="NCBI Taxonomy" id="257310"/>
    <lineage>
        <taxon>Bacteria</taxon>
        <taxon>Pseudomonadati</taxon>
        <taxon>Pseudomonadota</taxon>
        <taxon>Betaproteobacteria</taxon>
        <taxon>Burkholderiales</taxon>
        <taxon>Alcaligenaceae</taxon>
        <taxon>Bordetella</taxon>
    </lineage>
</organism>
<sequence>MNAVTDKSVADYIVADMALAGWGRRELAIAETEMPGLMAIRDEYAASQPLKGARIAGSLHMTIQTGVLIETLVALGAEVRWASCNIFSTQDHAAAAIAATGTPVFAIKGETLEEYWQYTHKIFEWPEGRHANMILDDGGDATLLLHLGARAEQDISVLAKPGSEEERVLFAAIKETLARDPKWYSTRLAQIKGVTEETTTGVHRLYQMSQKGELAFAAINVNDSVTKSKFDNLYGCRESLVDGIKRATDVMVAGKIAVVAGYGDVGKGCAQALAALRAQVWVTEIDPICALQAAMEGFKVVTMEEAAAHADIFVTATGNYHVITRQHMEAMKDQAIVCNIGHFDNEIDVAGLENCQWEEIKPQVDHVIFPDGKRIILLAKGRLVNLGCATGHPSFVMSSSFANQTIAQIELFTRNEAYTTGQVYVLPKHLDEKVARLHLKKLGAKLSTLSKQQADYIGVPVEGPFKPGHYRY</sequence>
<accession>Q7WQX5</accession>
<reference key="1">
    <citation type="journal article" date="2003" name="Nat. Genet.">
        <title>Comparative analysis of the genome sequences of Bordetella pertussis, Bordetella parapertussis and Bordetella bronchiseptica.</title>
        <authorList>
            <person name="Parkhill J."/>
            <person name="Sebaihia M."/>
            <person name="Preston A."/>
            <person name="Murphy L.D."/>
            <person name="Thomson N.R."/>
            <person name="Harris D.E."/>
            <person name="Holden M.T.G."/>
            <person name="Churcher C.M."/>
            <person name="Bentley S.D."/>
            <person name="Mungall K.L."/>
            <person name="Cerdeno-Tarraga A.-M."/>
            <person name="Temple L."/>
            <person name="James K.D."/>
            <person name="Harris B."/>
            <person name="Quail M.A."/>
            <person name="Achtman M."/>
            <person name="Atkin R."/>
            <person name="Baker S."/>
            <person name="Basham D."/>
            <person name="Bason N."/>
            <person name="Cherevach I."/>
            <person name="Chillingworth T."/>
            <person name="Collins M."/>
            <person name="Cronin A."/>
            <person name="Davis P."/>
            <person name="Doggett J."/>
            <person name="Feltwell T."/>
            <person name="Goble A."/>
            <person name="Hamlin N."/>
            <person name="Hauser H."/>
            <person name="Holroyd S."/>
            <person name="Jagels K."/>
            <person name="Leather S."/>
            <person name="Moule S."/>
            <person name="Norberczak H."/>
            <person name="O'Neil S."/>
            <person name="Ormond D."/>
            <person name="Price C."/>
            <person name="Rabbinowitsch E."/>
            <person name="Rutter S."/>
            <person name="Sanders M."/>
            <person name="Saunders D."/>
            <person name="Seeger K."/>
            <person name="Sharp S."/>
            <person name="Simmonds M."/>
            <person name="Skelton J."/>
            <person name="Squares R."/>
            <person name="Squares S."/>
            <person name="Stevens K."/>
            <person name="Unwin L."/>
            <person name="Whitehead S."/>
            <person name="Barrell B.G."/>
            <person name="Maskell D.J."/>
        </authorList>
    </citation>
    <scope>NUCLEOTIDE SEQUENCE [LARGE SCALE GENOMIC DNA]</scope>
    <source>
        <strain>ATCC BAA-588 / NCTC 13252 / RB50</strain>
    </source>
</reference>
<evidence type="ECO:0000255" key="1">
    <source>
        <dbReference type="HAMAP-Rule" id="MF_00563"/>
    </source>
</evidence>
<comment type="function">
    <text evidence="1">May play a key role in the regulation of the intracellular concentration of adenosylhomocysteine.</text>
</comment>
<comment type="catalytic activity">
    <reaction evidence="1">
        <text>S-adenosyl-L-homocysteine + H2O = L-homocysteine + adenosine</text>
        <dbReference type="Rhea" id="RHEA:21708"/>
        <dbReference type="ChEBI" id="CHEBI:15377"/>
        <dbReference type="ChEBI" id="CHEBI:16335"/>
        <dbReference type="ChEBI" id="CHEBI:57856"/>
        <dbReference type="ChEBI" id="CHEBI:58199"/>
        <dbReference type="EC" id="3.13.2.1"/>
    </reaction>
</comment>
<comment type="cofactor">
    <cofactor evidence="1">
        <name>NAD(+)</name>
        <dbReference type="ChEBI" id="CHEBI:57540"/>
    </cofactor>
    <text evidence="1">Binds 1 NAD(+) per subunit.</text>
</comment>
<comment type="pathway">
    <text evidence="1">Amino-acid biosynthesis; L-homocysteine biosynthesis; L-homocysteine from S-adenosyl-L-homocysteine: step 1/1.</text>
</comment>
<comment type="subcellular location">
    <subcellularLocation>
        <location evidence="1">Cytoplasm</location>
    </subcellularLocation>
</comment>
<comment type="similarity">
    <text evidence="1">Belongs to the adenosylhomocysteinase family.</text>
</comment>
<proteinExistence type="inferred from homology"/>
<keyword id="KW-0963">Cytoplasm</keyword>
<keyword id="KW-0378">Hydrolase</keyword>
<keyword id="KW-0520">NAD</keyword>
<keyword id="KW-0554">One-carbon metabolism</keyword>
<name>SAHH_BORBR</name>